<organism>
    <name type="scientific">Daucus carota</name>
    <name type="common">Wild carrot</name>
    <dbReference type="NCBI Taxonomy" id="4039"/>
    <lineage>
        <taxon>Eukaryota</taxon>
        <taxon>Viridiplantae</taxon>
        <taxon>Streptophyta</taxon>
        <taxon>Embryophyta</taxon>
        <taxon>Tracheophyta</taxon>
        <taxon>Spermatophyta</taxon>
        <taxon>Magnoliopsida</taxon>
        <taxon>eudicotyledons</taxon>
        <taxon>Gunneridae</taxon>
        <taxon>Pentapetalae</taxon>
        <taxon>asterids</taxon>
        <taxon>campanulids</taxon>
        <taxon>Apiales</taxon>
        <taxon>Apiaceae</taxon>
        <taxon>Apioideae</taxon>
        <taxon>Scandiceae</taxon>
        <taxon>Daucinae</taxon>
        <taxon>Daucus</taxon>
        <taxon>Daucus sect. Daucus</taxon>
    </lineage>
</organism>
<accession>P26791</accession>
<reference key="1">
    <citation type="journal article" date="1991" name="Plant Mol. Biol.">
        <title>Cloning and characterization of a carrot hsp70 gene.</title>
        <authorList>
            <person name="Lin X."/>
            <person name="Chern M."/>
            <person name="Zimmerman J.L."/>
        </authorList>
    </citation>
    <scope>NUCLEOTIDE SEQUENCE [GENOMIC DNA]</scope>
</reference>
<comment type="similarity">
    <text evidence="2">Belongs to the heat shock protein 70 family.</text>
</comment>
<sequence>MASKGGKAIGIDLGTTYSCVGVWQNDRVEIIANDQGNRTTPSYFAFTDTSRLIGDAKNQVAMNPSNTVFDAKRLIGRRFNHPSVQSDMKLWPLQVIPGPGEKPMIVVNYKGESKQFAAEEISSMVLIKMLEIAEAFLGHSVNDAVVTVPAYFNDSQRQATKDTGVIAGLNVMRIINEPNCAQIAYGLDKKSSNPPEQNVLIFDLGGGTFDVSLLTIEEGIYEVKAPKSDTHLGGEDFDNRLVNRFVTEFLTNNKKDIRWECEALRRLRTACERAKRTLSSSTAQTTIEIDSLYEGVDFYTTITRARFEELNMDLFKKCMDPVEKCLRDSKIDKAQVHEVVLVGGSTRIPKVQQLLQDFFNGKELCKSINPDEAVAYGAAVQAAILSGEGNERSDLLLLDVTPLSLGLETAGGVMTVLIPRNTTIPTKKEQIFSTYSDNQPGVLIQVYEGERARTRDNKLLGKLLGKFELTGIPPAPRGVPQINVVFDIDANGILNVFAEDKTAGVKNKITITNDNGRLSKDEIEKLVKEAEKYKAEDEEVKKKVEAKNALENYAYNMRNTIKDDKIPGKLDAGDKEKIETAVNEAIEWLEKNQLAEVDELEDKLKELEGLCNPIIARLYQGRGDVPIGGPGDMPGGGYGGSRGSSGAGPKIEEVD</sequence>
<gene>
    <name type="primary">HSP70</name>
</gene>
<keyword id="KW-0067">ATP-binding</keyword>
<keyword id="KW-0547">Nucleotide-binding</keyword>
<keyword id="KW-0346">Stress response</keyword>
<evidence type="ECO:0000256" key="1">
    <source>
        <dbReference type="SAM" id="MobiDB-lite"/>
    </source>
</evidence>
<evidence type="ECO:0000305" key="2"/>
<name>HSP70_DAUCA</name>
<dbReference type="EMBL" id="X60088">
    <property type="protein sequence ID" value="CAA42685.1"/>
    <property type="molecule type" value="Genomic_DNA"/>
</dbReference>
<dbReference type="PIR" id="S18349">
    <property type="entry name" value="S18349"/>
</dbReference>
<dbReference type="SMR" id="P26791"/>
<dbReference type="GO" id="GO:0005524">
    <property type="term" value="F:ATP binding"/>
    <property type="evidence" value="ECO:0007669"/>
    <property type="project" value="UniProtKB-KW"/>
</dbReference>
<dbReference type="GO" id="GO:0140662">
    <property type="term" value="F:ATP-dependent protein folding chaperone"/>
    <property type="evidence" value="ECO:0007669"/>
    <property type="project" value="InterPro"/>
</dbReference>
<dbReference type="CDD" id="cd10233">
    <property type="entry name" value="ASKHA_NBD_HSP70_HSPA1"/>
    <property type="match status" value="1"/>
</dbReference>
<dbReference type="FunFam" id="2.60.34.10:FF:000002">
    <property type="entry name" value="Heat shock 70 kDa"/>
    <property type="match status" value="1"/>
</dbReference>
<dbReference type="FunFam" id="3.90.640.10:FF:000002">
    <property type="entry name" value="Heat shock 70 kDa"/>
    <property type="match status" value="1"/>
</dbReference>
<dbReference type="FunFam" id="3.30.30.30:FF:000001">
    <property type="entry name" value="heat shock 70 kDa protein-like"/>
    <property type="match status" value="1"/>
</dbReference>
<dbReference type="FunFam" id="3.30.420.40:FF:000465">
    <property type="entry name" value="Heat shock cognate 70 kDa protein 2"/>
    <property type="match status" value="1"/>
</dbReference>
<dbReference type="FunFam" id="1.20.1270.10:FF:000016">
    <property type="entry name" value="Heat shock protein 70"/>
    <property type="match status" value="1"/>
</dbReference>
<dbReference type="FunFam" id="3.30.420.40:FF:000026">
    <property type="entry name" value="Heat shock protein 70"/>
    <property type="match status" value="1"/>
</dbReference>
<dbReference type="Gene3D" id="1.20.1270.10">
    <property type="match status" value="1"/>
</dbReference>
<dbReference type="Gene3D" id="3.30.30.30">
    <property type="match status" value="1"/>
</dbReference>
<dbReference type="Gene3D" id="3.30.420.40">
    <property type="match status" value="2"/>
</dbReference>
<dbReference type="Gene3D" id="3.90.640.10">
    <property type="entry name" value="Actin, Chain A, domain 4"/>
    <property type="match status" value="1"/>
</dbReference>
<dbReference type="Gene3D" id="2.60.34.10">
    <property type="entry name" value="Substrate Binding Domain Of DNAk, Chain A, domain 1"/>
    <property type="match status" value="1"/>
</dbReference>
<dbReference type="InterPro" id="IPR043129">
    <property type="entry name" value="ATPase_NBD"/>
</dbReference>
<dbReference type="InterPro" id="IPR018181">
    <property type="entry name" value="Heat_shock_70_CS"/>
</dbReference>
<dbReference type="InterPro" id="IPR029048">
    <property type="entry name" value="HSP70_C_sf"/>
</dbReference>
<dbReference type="InterPro" id="IPR029047">
    <property type="entry name" value="HSP70_peptide-bd_sf"/>
</dbReference>
<dbReference type="InterPro" id="IPR013126">
    <property type="entry name" value="Hsp_70_fam"/>
</dbReference>
<dbReference type="NCBIfam" id="NF001413">
    <property type="entry name" value="PRK00290.1"/>
    <property type="match status" value="1"/>
</dbReference>
<dbReference type="PANTHER" id="PTHR19375">
    <property type="entry name" value="HEAT SHOCK PROTEIN 70KDA"/>
    <property type="match status" value="1"/>
</dbReference>
<dbReference type="Pfam" id="PF00012">
    <property type="entry name" value="HSP70"/>
    <property type="match status" value="1"/>
</dbReference>
<dbReference type="PRINTS" id="PR00301">
    <property type="entry name" value="HEATSHOCK70"/>
</dbReference>
<dbReference type="SUPFAM" id="SSF53067">
    <property type="entry name" value="Actin-like ATPase domain"/>
    <property type="match status" value="2"/>
</dbReference>
<dbReference type="SUPFAM" id="SSF100934">
    <property type="entry name" value="Heat shock protein 70kD (HSP70), C-terminal subdomain"/>
    <property type="match status" value="1"/>
</dbReference>
<dbReference type="SUPFAM" id="SSF100920">
    <property type="entry name" value="Heat shock protein 70kD (HSP70), peptide-binding domain"/>
    <property type="match status" value="1"/>
</dbReference>
<dbReference type="PROSITE" id="PS00297">
    <property type="entry name" value="HSP70_1"/>
    <property type="match status" value="1"/>
</dbReference>
<dbReference type="PROSITE" id="PS00329">
    <property type="entry name" value="HSP70_2"/>
    <property type="match status" value="1"/>
</dbReference>
<dbReference type="PROSITE" id="PS01036">
    <property type="entry name" value="HSP70_3"/>
    <property type="match status" value="1"/>
</dbReference>
<proteinExistence type="inferred from homology"/>
<feature type="chain" id="PRO_0000078348" description="Heat shock 70 kDa protein">
    <location>
        <begin position="1"/>
        <end position="655"/>
    </location>
</feature>
<feature type="region of interest" description="Disordered" evidence="1">
    <location>
        <begin position="622"/>
        <end position="655"/>
    </location>
</feature>
<feature type="compositionally biased region" description="Gly residues" evidence="1">
    <location>
        <begin position="626"/>
        <end position="646"/>
    </location>
</feature>
<protein>
    <recommendedName>
        <fullName>Heat shock 70 kDa protein</fullName>
    </recommendedName>
</protein>